<evidence type="ECO:0000255" key="1">
    <source>
        <dbReference type="HAMAP-Rule" id="MF_00023"/>
    </source>
</evidence>
<protein>
    <recommendedName>
        <fullName evidence="1">SsrA-binding protein</fullName>
    </recommendedName>
    <alternativeName>
        <fullName evidence="1">Small protein B</fullName>
    </alternativeName>
</protein>
<name>SSRP_LACCB</name>
<sequence>MAKKHRQKPDNLLAQNKKAGHDYNILDTYEAGIALTGTEIKSVRDGKLNLRDGFARIRNNEAWLENVHISPYKEGNLFNVDPMRNRKLLLHKREIRKLGQMTARQGVTLVPLRMYLKHGYAKVLIGVAEGKHNYDKRETLKRKDQEREVQRALKARY</sequence>
<gene>
    <name evidence="1" type="primary">smpB</name>
    <name type="ordered locus">LCABL_11400</name>
</gene>
<keyword id="KW-0963">Cytoplasm</keyword>
<keyword id="KW-0694">RNA-binding</keyword>
<reference key="1">
    <citation type="submission" date="2008-06" db="EMBL/GenBank/DDBJ databases">
        <title>Lactobacillus casei BL23 complete genome sequence.</title>
        <authorList>
            <person name="Maze A."/>
            <person name="Boel G."/>
            <person name="Bourand A."/>
            <person name="Loux V."/>
            <person name="Gibrat J.F."/>
            <person name="Zuniga M."/>
            <person name="Hartke A."/>
            <person name="Deutscher J."/>
        </authorList>
    </citation>
    <scope>NUCLEOTIDE SEQUENCE [LARGE SCALE GENOMIC DNA]</scope>
    <source>
        <strain>BL23</strain>
    </source>
</reference>
<dbReference type="EMBL" id="FM177140">
    <property type="protein sequence ID" value="CAQ66225.1"/>
    <property type="molecule type" value="Genomic_DNA"/>
</dbReference>
<dbReference type="SMR" id="B3WCX4"/>
<dbReference type="KEGG" id="lcb:LCABL_11400"/>
<dbReference type="HOGENOM" id="CLU_108953_0_0_9"/>
<dbReference type="GO" id="GO:0005829">
    <property type="term" value="C:cytosol"/>
    <property type="evidence" value="ECO:0007669"/>
    <property type="project" value="TreeGrafter"/>
</dbReference>
<dbReference type="GO" id="GO:0003723">
    <property type="term" value="F:RNA binding"/>
    <property type="evidence" value="ECO:0007669"/>
    <property type="project" value="UniProtKB-UniRule"/>
</dbReference>
<dbReference type="GO" id="GO:0070929">
    <property type="term" value="P:trans-translation"/>
    <property type="evidence" value="ECO:0007669"/>
    <property type="project" value="UniProtKB-UniRule"/>
</dbReference>
<dbReference type="CDD" id="cd09294">
    <property type="entry name" value="SmpB"/>
    <property type="match status" value="1"/>
</dbReference>
<dbReference type="Gene3D" id="2.40.280.10">
    <property type="match status" value="1"/>
</dbReference>
<dbReference type="HAMAP" id="MF_00023">
    <property type="entry name" value="SmpB"/>
    <property type="match status" value="1"/>
</dbReference>
<dbReference type="InterPro" id="IPR023620">
    <property type="entry name" value="SmpB"/>
</dbReference>
<dbReference type="InterPro" id="IPR000037">
    <property type="entry name" value="SsrA-bd_prot"/>
</dbReference>
<dbReference type="InterPro" id="IPR020081">
    <property type="entry name" value="SsrA-bd_prot_CS"/>
</dbReference>
<dbReference type="NCBIfam" id="NF003843">
    <property type="entry name" value="PRK05422.1"/>
    <property type="match status" value="1"/>
</dbReference>
<dbReference type="NCBIfam" id="TIGR00086">
    <property type="entry name" value="smpB"/>
    <property type="match status" value="1"/>
</dbReference>
<dbReference type="PANTHER" id="PTHR30308:SF2">
    <property type="entry name" value="SSRA-BINDING PROTEIN"/>
    <property type="match status" value="1"/>
</dbReference>
<dbReference type="PANTHER" id="PTHR30308">
    <property type="entry name" value="TMRNA-BINDING COMPONENT OF TRANS-TRANSLATION TAGGING COMPLEX"/>
    <property type="match status" value="1"/>
</dbReference>
<dbReference type="Pfam" id="PF01668">
    <property type="entry name" value="SmpB"/>
    <property type="match status" value="1"/>
</dbReference>
<dbReference type="SUPFAM" id="SSF74982">
    <property type="entry name" value="Small protein B (SmpB)"/>
    <property type="match status" value="1"/>
</dbReference>
<dbReference type="PROSITE" id="PS01317">
    <property type="entry name" value="SSRP"/>
    <property type="match status" value="1"/>
</dbReference>
<feature type="chain" id="PRO_1000090158" description="SsrA-binding protein">
    <location>
        <begin position="1"/>
        <end position="157"/>
    </location>
</feature>
<accession>B3WCX4</accession>
<proteinExistence type="inferred from homology"/>
<comment type="function">
    <text evidence="1">Required for rescue of stalled ribosomes mediated by trans-translation. Binds to transfer-messenger RNA (tmRNA), required for stable association of tmRNA with ribosomes. tmRNA and SmpB together mimic tRNA shape, replacing the anticodon stem-loop with SmpB. tmRNA is encoded by the ssrA gene; the 2 termini fold to resemble tRNA(Ala) and it encodes a 'tag peptide', a short internal open reading frame. During trans-translation Ala-aminoacylated tmRNA acts like a tRNA, entering the A-site of stalled ribosomes, displacing the stalled mRNA. The ribosome then switches to translate the ORF on the tmRNA; the nascent peptide is terminated with the 'tag peptide' encoded by the tmRNA and targeted for degradation. The ribosome is freed to recommence translation, which seems to be the essential function of trans-translation.</text>
</comment>
<comment type="subcellular location">
    <subcellularLocation>
        <location evidence="1">Cytoplasm</location>
    </subcellularLocation>
    <text evidence="1">The tmRNA-SmpB complex associates with stalled 70S ribosomes.</text>
</comment>
<comment type="similarity">
    <text evidence="1">Belongs to the SmpB family.</text>
</comment>
<organism>
    <name type="scientific">Lacticaseibacillus casei (strain BL23)</name>
    <name type="common">Lactobacillus casei</name>
    <dbReference type="NCBI Taxonomy" id="543734"/>
    <lineage>
        <taxon>Bacteria</taxon>
        <taxon>Bacillati</taxon>
        <taxon>Bacillota</taxon>
        <taxon>Bacilli</taxon>
        <taxon>Lactobacillales</taxon>
        <taxon>Lactobacillaceae</taxon>
        <taxon>Lacticaseibacillus</taxon>
    </lineage>
</organism>